<proteinExistence type="evidence at transcript level"/>
<sequence>WIMGHMVNAIYQIDEFVNLGANSIETDVSFDDNANPEYTYHGIPCDCGRSCLKWENYNDFLKGLRSATTPGNSKYQSKLILVVFDLKTGSLYDNQASEAGKKLAKNLLKHYWNNGNNGGRAYIVLSIPDLNHYPLIKGFTDTLKQEGHPELLEKVGYDFSGNDAVGDVAKAYKKAGVSGHVWQSDGITNCLLRGLTRVKEAVANRDSGNGYINKVYYWTVDKRATTRDALDAGVDGVMTNYPDVIADVMNEAAYKNKVRLATYEDSPWVTFKK</sequence>
<dbReference type="EC" id="4.6.1.-" evidence="4"/>
<dbReference type="EMBL" id="FJ171340">
    <property type="protein sequence ID" value="ACN48836.1"/>
    <property type="molecule type" value="mRNA"/>
</dbReference>
<dbReference type="EMBL" id="FJ171341">
    <property type="protein sequence ID" value="ACN48837.1"/>
    <property type="molecule type" value="mRNA"/>
</dbReference>
<dbReference type="EMBL" id="FJ171342">
    <property type="protein sequence ID" value="ACN48838.1"/>
    <property type="molecule type" value="mRNA"/>
</dbReference>
<dbReference type="EMBL" id="FJ171346">
    <property type="protein sequence ID" value="ACN48842.1"/>
    <property type="molecule type" value="mRNA"/>
</dbReference>
<dbReference type="EMBL" id="FJ171349">
    <property type="protein sequence ID" value="ACN48845.1"/>
    <property type="molecule type" value="mRNA"/>
</dbReference>
<dbReference type="EMBL" id="FJ171350">
    <property type="protein sequence ID" value="ACN48846.1"/>
    <property type="molecule type" value="mRNA"/>
</dbReference>
<dbReference type="EMBL" id="FJ171351">
    <property type="protein sequence ID" value="ACN48847.1"/>
    <property type="molecule type" value="mRNA"/>
</dbReference>
<dbReference type="SMR" id="C0JAQ5"/>
<dbReference type="ArachnoServer" id="AS001086">
    <property type="toxin name" value="Sictox-LhialphaIA2a (fragment)"/>
</dbReference>
<dbReference type="GO" id="GO:0005576">
    <property type="term" value="C:extracellular region"/>
    <property type="evidence" value="ECO:0007669"/>
    <property type="project" value="UniProtKB-SubCell"/>
</dbReference>
<dbReference type="GO" id="GO:0016829">
    <property type="term" value="F:lyase activity"/>
    <property type="evidence" value="ECO:0007669"/>
    <property type="project" value="UniProtKB-KW"/>
</dbReference>
<dbReference type="GO" id="GO:0046872">
    <property type="term" value="F:metal ion binding"/>
    <property type="evidence" value="ECO:0007669"/>
    <property type="project" value="UniProtKB-KW"/>
</dbReference>
<dbReference type="GO" id="GO:0008081">
    <property type="term" value="F:phosphoric diester hydrolase activity"/>
    <property type="evidence" value="ECO:0007669"/>
    <property type="project" value="InterPro"/>
</dbReference>
<dbReference type="GO" id="GO:0090729">
    <property type="term" value="F:toxin activity"/>
    <property type="evidence" value="ECO:0007669"/>
    <property type="project" value="UniProtKB-KW"/>
</dbReference>
<dbReference type="GO" id="GO:0031640">
    <property type="term" value="P:killing of cells of another organism"/>
    <property type="evidence" value="ECO:0007669"/>
    <property type="project" value="UniProtKB-KW"/>
</dbReference>
<dbReference type="GO" id="GO:0016042">
    <property type="term" value="P:lipid catabolic process"/>
    <property type="evidence" value="ECO:0007669"/>
    <property type="project" value="UniProtKB-KW"/>
</dbReference>
<dbReference type="CDD" id="cd08576">
    <property type="entry name" value="GDPD_like_SMaseD_PLD"/>
    <property type="match status" value="1"/>
</dbReference>
<dbReference type="Gene3D" id="3.20.20.190">
    <property type="entry name" value="Phosphatidylinositol (PI) phosphodiesterase"/>
    <property type="match status" value="1"/>
</dbReference>
<dbReference type="InterPro" id="IPR017946">
    <property type="entry name" value="PLC-like_Pdiesterase_TIM-brl"/>
</dbReference>
<dbReference type="Pfam" id="PF13653">
    <property type="entry name" value="GDPD_2"/>
    <property type="match status" value="1"/>
</dbReference>
<dbReference type="SUPFAM" id="SSF51695">
    <property type="entry name" value="PLC-like phosphodiesterases"/>
    <property type="match status" value="1"/>
</dbReference>
<protein>
    <recommendedName>
        <fullName evidence="6">Dermonecrotic toxin LhSicTox-alphaIA2ai</fullName>
        <ecNumber evidence="4">4.6.1.-</ecNumber>
    </recommendedName>
    <alternativeName>
        <fullName>Phospholipase D</fullName>
        <shortName>PLD</shortName>
    </alternativeName>
    <alternativeName>
        <fullName>Sphingomyelin phosphodiesterase D</fullName>
        <shortName>SMD</shortName>
        <shortName>SMase D</shortName>
        <shortName>Sphingomyelinase D</shortName>
    </alternativeName>
</protein>
<organism>
    <name type="scientific">Loxosceles hirsuta</name>
    <name type="common">Recluse spider</name>
    <dbReference type="NCBI Taxonomy" id="571525"/>
    <lineage>
        <taxon>Eukaryota</taxon>
        <taxon>Metazoa</taxon>
        <taxon>Ecdysozoa</taxon>
        <taxon>Arthropoda</taxon>
        <taxon>Chelicerata</taxon>
        <taxon>Arachnida</taxon>
        <taxon>Araneae</taxon>
        <taxon>Araneomorphae</taxon>
        <taxon>Haplogynae</taxon>
        <taxon>Scytodoidea</taxon>
        <taxon>Sicariidae</taxon>
        <taxon>Loxosceles</taxon>
    </lineage>
</organism>
<feature type="chain" id="PRO_0000392747" description="Dermonecrotic toxin LhSicTox-alphaIA2ai">
    <location>
        <begin position="1" status="less than"/>
        <end position="273"/>
    </location>
</feature>
<feature type="active site" evidence="5">
    <location>
        <position position="5"/>
    </location>
</feature>
<feature type="active site" description="Nucleophile" evidence="5">
    <location>
        <position position="41"/>
    </location>
</feature>
<feature type="binding site" evidence="5">
    <location>
        <position position="25"/>
    </location>
    <ligand>
        <name>Mg(2+)</name>
        <dbReference type="ChEBI" id="CHEBI:18420"/>
    </ligand>
</feature>
<feature type="binding site" evidence="5">
    <location>
        <position position="27"/>
    </location>
    <ligand>
        <name>Mg(2+)</name>
        <dbReference type="ChEBI" id="CHEBI:18420"/>
    </ligand>
</feature>
<feature type="binding site" evidence="5">
    <location>
        <position position="85"/>
    </location>
    <ligand>
        <name>Mg(2+)</name>
        <dbReference type="ChEBI" id="CHEBI:18420"/>
    </ligand>
</feature>
<feature type="disulfide bond" evidence="3">
    <location>
        <begin position="45"/>
        <end position="51"/>
    </location>
</feature>
<feature type="disulfide bond" evidence="3">
    <location>
        <begin position="47"/>
        <end position="190"/>
    </location>
</feature>
<feature type="non-terminal residue">
    <location>
        <position position="1"/>
    </location>
</feature>
<accession>C0JAQ5</accession>
<accession>C0JAQ7</accession>
<comment type="function">
    <text evidence="1 3">Dermonecrotic toxins cleave the phosphodiester linkage between the phosphate and headgroup of certain phospholipids (sphingolipid and lysolipid substrates), forming an alcohol (often choline) and a cyclic phosphate (By similarity). This toxin acts on sphingomyelin (SM) (By similarity). It may also act on ceramide phosphoethanolamine (CPE), lysophosphatidylcholine (LPC) and lysophosphatidylethanolamine (LPE), but not on lysophosphatidylserine (LPS), and lysophosphatidylglycerol (LPG) (By similarity). It acts by transphosphatidylation, releasing exclusively cyclic phosphate products as second products (By similarity). Induces dermonecrosis, hemolysis, increased vascular permeability, edema, inflammatory response, and platelet aggregation (By similarity).</text>
</comment>
<comment type="catalytic activity">
    <reaction evidence="1">
        <text>an N-(acyl)-sphingosylphosphocholine = an N-(acyl)-sphingosyl-1,3-cyclic phosphate + choline</text>
        <dbReference type="Rhea" id="RHEA:60652"/>
        <dbReference type="ChEBI" id="CHEBI:15354"/>
        <dbReference type="ChEBI" id="CHEBI:64583"/>
        <dbReference type="ChEBI" id="CHEBI:143892"/>
    </reaction>
</comment>
<comment type="catalytic activity">
    <reaction evidence="1">
        <text>an N-(acyl)-sphingosylphosphoethanolamine = an N-(acyl)-sphingosyl-1,3-cyclic phosphate + ethanolamine</text>
        <dbReference type="Rhea" id="RHEA:60648"/>
        <dbReference type="ChEBI" id="CHEBI:57603"/>
        <dbReference type="ChEBI" id="CHEBI:143891"/>
        <dbReference type="ChEBI" id="CHEBI:143892"/>
    </reaction>
</comment>
<comment type="catalytic activity">
    <reaction evidence="1">
        <text>a 1-acyl-sn-glycero-3-phosphocholine = a 1-acyl-sn-glycero-2,3-cyclic phosphate + choline</text>
        <dbReference type="Rhea" id="RHEA:60700"/>
        <dbReference type="ChEBI" id="CHEBI:15354"/>
        <dbReference type="ChEBI" id="CHEBI:58168"/>
        <dbReference type="ChEBI" id="CHEBI:143947"/>
    </reaction>
</comment>
<comment type="catalytic activity">
    <reaction evidence="1">
        <text>a 1-acyl-sn-glycero-3-phosphoethanolamine = a 1-acyl-sn-glycero-2,3-cyclic phosphate + ethanolamine</text>
        <dbReference type="Rhea" id="RHEA:60704"/>
        <dbReference type="ChEBI" id="CHEBI:57603"/>
        <dbReference type="ChEBI" id="CHEBI:64381"/>
        <dbReference type="ChEBI" id="CHEBI:143947"/>
    </reaction>
</comment>
<comment type="cofactor">
    <cofactor evidence="5">
        <name>Mg(2+)</name>
        <dbReference type="ChEBI" id="CHEBI:18420"/>
    </cofactor>
    <text evidence="5">Binds 1 Mg(2+) ion per subunit.</text>
</comment>
<comment type="subcellular location">
    <subcellularLocation>
        <location evidence="8">Secreted</location>
    </subcellularLocation>
</comment>
<comment type="tissue specificity">
    <text evidence="8">Expressed by the venom gland.</text>
</comment>
<comment type="similarity">
    <text evidence="7">Belongs to the arthropod phospholipase D family. Class II subfamily.</text>
</comment>
<comment type="caution">
    <text evidence="1 2 4">The most common activity assay for dermonecrotic toxins detects enzymatic activity by monitoring choline release from substrate. Liberation of choline from sphingomyelin (SM) or lysophosphatidylcholine (LPC) is commonly assumed to result from substrate hydrolysis, giving either ceramide-1-phosphate (C1P) or lysophosphatidic acid (LPA), respectively, as a second product. However, two studies from Lajoie and colleagues (2013 and 2015) report the observation of exclusive formation of cyclic phosphate products as second products, resulting from intramolecular transphosphatidylation. Cyclic phosphates have vastly different biological properties from their monoester counterparts, and they may be relevant to the pathology of brown spider envenomation.</text>
</comment>
<name>A1IA1_LOXHI</name>
<evidence type="ECO:0000250" key="1">
    <source>
        <dbReference type="UniProtKB" id="A0A0D4WTV1"/>
    </source>
</evidence>
<evidence type="ECO:0000250" key="2">
    <source>
        <dbReference type="UniProtKB" id="A0A0D4WV12"/>
    </source>
</evidence>
<evidence type="ECO:0000250" key="3">
    <source>
        <dbReference type="UniProtKB" id="P0CE80"/>
    </source>
</evidence>
<evidence type="ECO:0000250" key="4">
    <source>
        <dbReference type="UniProtKB" id="Q4ZFU2"/>
    </source>
</evidence>
<evidence type="ECO:0000250" key="5">
    <source>
        <dbReference type="UniProtKB" id="Q8I914"/>
    </source>
</evidence>
<evidence type="ECO:0000303" key="6">
    <source>
    </source>
</evidence>
<evidence type="ECO:0000305" key="7"/>
<evidence type="ECO:0000305" key="8">
    <source>
    </source>
</evidence>
<reference key="1">
    <citation type="journal article" date="2009" name="Mol. Biol. Evol.">
        <title>Molecular evolution, functional variation, and proposed nomenclature of the gene family that includes sphingomyelinase D in sicariid spider venoms.</title>
        <authorList>
            <person name="Binford G.J."/>
            <person name="Bodner M.R."/>
            <person name="Cordes M.H."/>
            <person name="Baldwin K.L."/>
            <person name="Rynerson M.R."/>
            <person name="Burns S.N."/>
            <person name="Zobel-Thropp P.A."/>
        </authorList>
    </citation>
    <scope>NUCLEOTIDE SEQUENCE [MRNA]</scope>
    <scope>NOMENCLATURE</scope>
    <source>
        <tissue>Venom gland</tissue>
    </source>
</reference>
<keyword id="KW-0204">Cytolysis</keyword>
<keyword id="KW-1061">Dermonecrotic toxin</keyword>
<keyword id="KW-1015">Disulfide bond</keyword>
<keyword id="KW-0354">Hemolysis</keyword>
<keyword id="KW-0442">Lipid degradation</keyword>
<keyword id="KW-0443">Lipid metabolism</keyword>
<keyword id="KW-0456">Lyase</keyword>
<keyword id="KW-0460">Magnesium</keyword>
<keyword id="KW-0479">Metal-binding</keyword>
<keyword id="KW-0964">Secreted</keyword>
<keyword id="KW-0800">Toxin</keyword>